<proteinExistence type="evidence at transcript level"/>
<name>PSBS2_ORYSJ</name>
<evidence type="ECO:0000250" key="1">
    <source>
        <dbReference type="UniProtKB" id="Q9XF91"/>
    </source>
</evidence>
<evidence type="ECO:0000255" key="2"/>
<evidence type="ECO:0000269" key="3">
    <source>
    </source>
</evidence>
<evidence type="ECO:0000269" key="4">
    <source>
    </source>
</evidence>
<evidence type="ECO:0000269" key="5">
    <source>
    </source>
</evidence>
<evidence type="ECO:0000269" key="6">
    <source>
    </source>
</evidence>
<evidence type="ECO:0000303" key="7">
    <source>
    </source>
</evidence>
<evidence type="ECO:0000303" key="8">
    <source>
    </source>
</evidence>
<evidence type="ECO:0000303" key="9">
    <source>
    </source>
</evidence>
<evidence type="ECO:0000305" key="10"/>
<evidence type="ECO:0000312" key="11">
    <source>
        <dbReference type="EMBL" id="BAF16268.1"/>
    </source>
</evidence>
<evidence type="ECO:0000312" key="12">
    <source>
        <dbReference type="EMBL" id="BAS91775.1"/>
    </source>
</evidence>
<evidence type="ECO:0000312" key="13">
    <source>
        <dbReference type="EMBL" id="CAE01809.2"/>
    </source>
</evidence>
<evidence type="ECO:0000312" key="14">
    <source>
        <dbReference type="EMBL" id="EAZ32512.1"/>
    </source>
</evidence>
<comment type="function">
    <text evidence="3 4">Involved in high light-mediated energy-dependent nonphotochemical quenching (NPQ, qE) and thermal dissipation (TD) thus regulating energy conversion in photosystem II and protecting from photoinhibition (PubMed:21873330, PubMed:24850835). Also seems to regulate quantum yield of electron transport in fluctuating light conditions (PubMed:24850835).</text>
</comment>
<comment type="subcellular location">
    <subcellularLocation>
        <location evidence="1">Plastid</location>
        <location evidence="1">Chloroplast thylakoid membrane</location>
        <topology evidence="2">Multi-pass membrane protein</topology>
    </subcellularLocation>
</comment>
<comment type="induction">
    <text evidence="6">Strongly induced by blue light (PubMed:9055819). Triggered by red light in etiolated seedlings; this induction is reversed by far-red light (PubMed:9055819).</text>
</comment>
<comment type="disruption phenotype">
    <text evidence="3 4 5">No visible non-photochemical quenching (NPQ) phenotype (PubMed:25342550). Plants missing both PSBS1 and PSBS2 exhibit a decreased light-inducible portion of thermal dissipation (TD), including energy quenching (qE)-associated TD (qE-TD) (PubMed:21873330, PubMed:24850835). Plants missing both PSBS1 and PSBS2 have a higher quantum yield of electron transport upon the transition from high light to low light, but a lower quantum yield of electron transport II upon the transition from low light to high light (PubMed:24850835).</text>
</comment>
<comment type="similarity">
    <text evidence="10">Belongs to the ELIP/psbS family.</text>
</comment>
<comment type="sequence caution" evidence="10">
    <conflict type="erroneous initiation">
        <sequence resource="EMBL-CDS" id="CAE01809"/>
    </conflict>
    <text>Truncated N-terminus.</text>
</comment>
<comment type="sequence caution" evidence="10">
    <conflict type="erroneous initiation">
        <sequence resource="EMBL-CDS" id="EAZ32512"/>
    </conflict>
    <text>Truncated N-terminus.</text>
</comment>
<reference key="1">
    <citation type="journal article" date="1997" name="Gene">
        <title>Cloning of cDNA encoding the rice 22 kDa protein of Photosystem II (PSII-S) and analysis of light-induced expression of the gene.</title>
        <authorList>
            <person name="Iwasaki T."/>
            <person name="Saito Y."/>
            <person name="Harada E."/>
            <person name="Kasai M."/>
            <person name="Shoji K."/>
            <person name="Miyao M."/>
            <person name="Yamamoto N."/>
        </authorList>
    </citation>
    <scope>NUCLEOTIDE SEQUENCE [MRNA]</scope>
    <scope>INDUCTION BY LIGHT</scope>
    <source>
        <strain>cv. Nipponbare</strain>
        <tissue>Leaf</tissue>
    </source>
</reference>
<reference key="2">
    <citation type="journal article" date="2002" name="Nature">
        <title>Sequence and analysis of rice chromosome 4.</title>
        <authorList>
            <person name="Feng Q."/>
            <person name="Zhang Y."/>
            <person name="Hao P."/>
            <person name="Wang S."/>
            <person name="Fu G."/>
            <person name="Huang Y."/>
            <person name="Li Y."/>
            <person name="Zhu J."/>
            <person name="Liu Y."/>
            <person name="Hu X."/>
            <person name="Jia P."/>
            <person name="Zhang Y."/>
            <person name="Zhao Q."/>
            <person name="Ying K."/>
            <person name="Yu S."/>
            <person name="Tang Y."/>
            <person name="Weng Q."/>
            <person name="Zhang L."/>
            <person name="Lu Y."/>
            <person name="Mu J."/>
            <person name="Lu Y."/>
            <person name="Zhang L.S."/>
            <person name="Yu Z."/>
            <person name="Fan D."/>
            <person name="Liu X."/>
            <person name="Lu T."/>
            <person name="Li C."/>
            <person name="Wu Y."/>
            <person name="Sun T."/>
            <person name="Lei H."/>
            <person name="Li T."/>
            <person name="Hu H."/>
            <person name="Guan J."/>
            <person name="Wu M."/>
            <person name="Zhang R."/>
            <person name="Zhou B."/>
            <person name="Chen Z."/>
            <person name="Chen L."/>
            <person name="Jin Z."/>
            <person name="Wang R."/>
            <person name="Yin H."/>
            <person name="Cai Z."/>
            <person name="Ren S."/>
            <person name="Lv G."/>
            <person name="Gu W."/>
            <person name="Zhu G."/>
            <person name="Tu Y."/>
            <person name="Jia J."/>
            <person name="Zhang Y."/>
            <person name="Chen J."/>
            <person name="Kang H."/>
            <person name="Chen X."/>
            <person name="Shao C."/>
            <person name="Sun Y."/>
            <person name="Hu Q."/>
            <person name="Zhang X."/>
            <person name="Zhang W."/>
            <person name="Wang L."/>
            <person name="Ding C."/>
            <person name="Sheng H."/>
            <person name="Gu J."/>
            <person name="Chen S."/>
            <person name="Ni L."/>
            <person name="Zhu F."/>
            <person name="Chen W."/>
            <person name="Lan L."/>
            <person name="Lai Y."/>
            <person name="Cheng Z."/>
            <person name="Gu M."/>
            <person name="Jiang J."/>
            <person name="Li J."/>
            <person name="Hong G."/>
            <person name="Xue Y."/>
            <person name="Han B."/>
        </authorList>
    </citation>
    <scope>NUCLEOTIDE SEQUENCE [LARGE SCALE GENOMIC DNA]</scope>
    <source>
        <strain>cv. Nipponbare</strain>
    </source>
</reference>
<reference key="3">
    <citation type="journal article" date="2005" name="Nature">
        <title>The map-based sequence of the rice genome.</title>
        <authorList>
            <consortium name="International rice genome sequencing project (IRGSP)"/>
        </authorList>
    </citation>
    <scope>NUCLEOTIDE SEQUENCE [LARGE SCALE GENOMIC DNA]</scope>
    <source>
        <strain>cv. Nipponbare</strain>
    </source>
</reference>
<reference key="4">
    <citation type="journal article" date="2008" name="Nucleic Acids Res.">
        <title>The rice annotation project database (RAP-DB): 2008 update.</title>
        <authorList>
            <consortium name="The rice annotation project (RAP)"/>
        </authorList>
    </citation>
    <scope>GENOME REANNOTATION</scope>
    <source>
        <strain>cv. Nipponbare</strain>
    </source>
</reference>
<reference key="5">
    <citation type="journal article" date="2013" name="Rice">
        <title>Improvement of the Oryza sativa Nipponbare reference genome using next generation sequence and optical map data.</title>
        <authorList>
            <person name="Kawahara Y."/>
            <person name="de la Bastide M."/>
            <person name="Hamilton J.P."/>
            <person name="Kanamori H."/>
            <person name="McCombie W.R."/>
            <person name="Ouyang S."/>
            <person name="Schwartz D.C."/>
            <person name="Tanaka T."/>
            <person name="Wu J."/>
            <person name="Zhou S."/>
            <person name="Childs K.L."/>
            <person name="Davidson R.M."/>
            <person name="Lin H."/>
            <person name="Quesada-Ocampo L."/>
            <person name="Vaillancourt B."/>
            <person name="Sakai H."/>
            <person name="Lee S.S."/>
            <person name="Kim J."/>
            <person name="Numa H."/>
            <person name="Itoh T."/>
            <person name="Buell C.R."/>
            <person name="Matsumoto T."/>
        </authorList>
    </citation>
    <scope>GENOME REANNOTATION</scope>
    <source>
        <strain>cv. Nipponbare</strain>
    </source>
</reference>
<reference key="6">
    <citation type="journal article" date="2005" name="PLoS Biol.">
        <title>The genomes of Oryza sativa: a history of duplications.</title>
        <authorList>
            <person name="Yu J."/>
            <person name="Wang J."/>
            <person name="Lin W."/>
            <person name="Li S."/>
            <person name="Li H."/>
            <person name="Zhou J."/>
            <person name="Ni P."/>
            <person name="Dong W."/>
            <person name="Hu S."/>
            <person name="Zeng C."/>
            <person name="Zhang J."/>
            <person name="Zhang Y."/>
            <person name="Li R."/>
            <person name="Xu Z."/>
            <person name="Li S."/>
            <person name="Li X."/>
            <person name="Zheng H."/>
            <person name="Cong L."/>
            <person name="Lin L."/>
            <person name="Yin J."/>
            <person name="Geng J."/>
            <person name="Li G."/>
            <person name="Shi J."/>
            <person name="Liu J."/>
            <person name="Lv H."/>
            <person name="Li J."/>
            <person name="Wang J."/>
            <person name="Deng Y."/>
            <person name="Ran L."/>
            <person name="Shi X."/>
            <person name="Wang X."/>
            <person name="Wu Q."/>
            <person name="Li C."/>
            <person name="Ren X."/>
            <person name="Wang J."/>
            <person name="Wang X."/>
            <person name="Li D."/>
            <person name="Liu D."/>
            <person name="Zhang X."/>
            <person name="Ji Z."/>
            <person name="Zhao W."/>
            <person name="Sun Y."/>
            <person name="Zhang Z."/>
            <person name="Bao J."/>
            <person name="Han Y."/>
            <person name="Dong L."/>
            <person name="Ji J."/>
            <person name="Chen P."/>
            <person name="Wu S."/>
            <person name="Liu J."/>
            <person name="Xiao Y."/>
            <person name="Bu D."/>
            <person name="Tan J."/>
            <person name="Yang L."/>
            <person name="Ye C."/>
            <person name="Zhang J."/>
            <person name="Xu J."/>
            <person name="Zhou Y."/>
            <person name="Yu Y."/>
            <person name="Zhang B."/>
            <person name="Zhuang S."/>
            <person name="Wei H."/>
            <person name="Liu B."/>
            <person name="Lei M."/>
            <person name="Yu H."/>
            <person name="Li Y."/>
            <person name="Xu H."/>
            <person name="Wei S."/>
            <person name="He X."/>
            <person name="Fang L."/>
            <person name="Zhang Z."/>
            <person name="Zhang Y."/>
            <person name="Huang X."/>
            <person name="Su Z."/>
            <person name="Tong W."/>
            <person name="Li J."/>
            <person name="Tong Z."/>
            <person name="Li S."/>
            <person name="Ye J."/>
            <person name="Wang L."/>
            <person name="Fang L."/>
            <person name="Lei T."/>
            <person name="Chen C.-S."/>
            <person name="Chen H.-C."/>
            <person name="Xu Z."/>
            <person name="Li H."/>
            <person name="Huang H."/>
            <person name="Zhang F."/>
            <person name="Xu H."/>
            <person name="Li N."/>
            <person name="Zhao C."/>
            <person name="Li S."/>
            <person name="Dong L."/>
            <person name="Huang Y."/>
            <person name="Li L."/>
            <person name="Xi Y."/>
            <person name="Qi Q."/>
            <person name="Li W."/>
            <person name="Zhang B."/>
            <person name="Hu W."/>
            <person name="Zhang Y."/>
            <person name="Tian X."/>
            <person name="Jiao Y."/>
            <person name="Liang X."/>
            <person name="Jin J."/>
            <person name="Gao L."/>
            <person name="Zheng W."/>
            <person name="Hao B."/>
            <person name="Liu S.-M."/>
            <person name="Wang W."/>
            <person name="Yuan L."/>
            <person name="Cao M."/>
            <person name="McDermott J."/>
            <person name="Samudrala R."/>
            <person name="Wang J."/>
            <person name="Wong G.K.-S."/>
            <person name="Yang H."/>
        </authorList>
    </citation>
    <scope>NUCLEOTIDE SEQUENCE [LARGE SCALE GENOMIC DNA]</scope>
    <source>
        <strain>cv. Nipponbare</strain>
    </source>
</reference>
<reference key="7">
    <citation type="journal article" date="2010" name="Plant Signal. Behav.">
        <title>Genome-wide analysis of the family of light-harvesting chlorophyll a/b-binding proteins in Arabidopsis and rice.</title>
        <authorList>
            <person name="Umate P."/>
        </authorList>
    </citation>
    <scope>REVIEW</scope>
</reference>
<reference key="8">
    <citation type="journal article" date="2011" name="Plant Cell Physiol.">
        <title>Allocation of absorbed light energy in PSII to thermal dissipations in the presence or absence of PsbS subunits of rice.</title>
        <authorList>
            <person name="Ishida S."/>
            <person name="Morita K."/>
            <person name="Kishine M."/>
            <person name="Takabayashi A."/>
            <person name="Murakami R."/>
            <person name="Takeda S."/>
            <person name="Shimamoto K."/>
            <person name="Sato F."/>
            <person name="Endo T."/>
        </authorList>
    </citation>
    <scope>FUNCTION</scope>
    <scope>DISRUPTION PHENOTYPE</scope>
    <source>
        <strain>cv. Nipponbare</strain>
    </source>
</reference>
<reference key="9">
    <citation type="journal article" date="2011" name="Proc. Natl. Acad. Sci. U.S.A.">
        <title>Molecular distinction in genetic regulation of nonphotochemical quenching in rice.</title>
        <authorList>
            <person name="Kasajima I."/>
            <person name="Ebana K."/>
            <person name="Yamamoto T."/>
            <person name="Takahara K."/>
            <person name="Yano M."/>
            <person name="Kawai-Yamada M."/>
            <person name="Uchimiya H."/>
        </authorList>
    </citation>
    <scope>GENE FAMILY</scope>
    <scope>NOMENCLATURE</scope>
</reference>
<reference key="10">
    <citation type="journal article" date="2014" name="BMC Plant Biol.">
        <title>Production of superoxide from Photosystem II in a rice (Oryza sativa L.) mutant lacking PsbS.</title>
        <authorList>
            <person name="Zulfugarov I.S."/>
            <person name="Tovuu A."/>
            <person name="Eu Y.-J."/>
            <person name="Dogsom B."/>
            <person name="Poudyal R.S."/>
            <person name="Nath K."/>
            <person name="Hall M."/>
            <person name="Banerjee M."/>
            <person name="Yoon U.C."/>
            <person name="Moon Y.-H."/>
            <person name="An G."/>
            <person name="Jansson S."/>
            <person name="Lee C.-H."/>
        </authorList>
    </citation>
    <scope>DISRUPTION PHENOTYPE</scope>
</reference>
<reference key="11">
    <citation type="journal article" date="2014" name="Plant Cell Physiol.">
        <title>Physiological functions of PsbS-dependent and PsbS-independent NPQ under naturally fluctuating light conditions.</title>
        <authorList>
            <person name="Ikeuchi M."/>
            <person name="Uebayashi N."/>
            <person name="Sato F."/>
            <person name="Endo T."/>
        </authorList>
    </citation>
    <scope>FUNCTION</scope>
    <scope>DISRUPTION PHENOTYPE</scope>
</reference>
<reference key="12">
    <citation type="journal article" date="2014" name="Plant Physiol. Biochem.">
        <title>Light energy allocation at PSII under field light conditions: how much energy is lost in NPQ-associated dissipation?</title>
        <authorList>
            <person name="Endo T."/>
            <person name="Uebayashi N."/>
            <person name="Ishida S."/>
            <person name="Ikeuchi M."/>
            <person name="Sato F."/>
        </authorList>
    </citation>
    <scope>REVIEW</scope>
</reference>
<feature type="transit peptide" description="Chloroplast" evidence="2">
    <location>
        <begin position="1"/>
        <end position="38"/>
    </location>
</feature>
<feature type="chain" id="PRO_0000447494" description="Photosystem II 22 kDa protein 2, chloroplastic">
    <location>
        <begin position="39"/>
        <end position="254"/>
    </location>
</feature>
<feature type="transmembrane region" description="Helical" evidence="2">
    <location>
        <begin position="86"/>
        <end position="106"/>
    </location>
</feature>
<feature type="transmembrane region" description="Helical" evidence="2">
    <location>
        <begin position="120"/>
        <end position="140"/>
    </location>
</feature>
<feature type="transmembrane region" description="Helical" evidence="2">
    <location>
        <begin position="184"/>
        <end position="204"/>
    </location>
</feature>
<feature type="transmembrane region" description="Helical" evidence="2">
    <location>
        <begin position="219"/>
        <end position="239"/>
    </location>
</feature>
<feature type="repeat" description="1" evidence="10">
    <location>
        <begin position="42"/>
        <end position="148"/>
    </location>
</feature>
<feature type="repeat" description="2" evidence="10">
    <location>
        <begin position="149"/>
        <end position="253"/>
    </location>
</feature>
<feature type="sequence conflict" description="In Ref. 1; BAA12337." evidence="10" ref="1">
    <original>QL</original>
    <variation>HV</variation>
    <location>
        <begin position="191"/>
        <end position="192"/>
    </location>
</feature>
<accession>Q0J8R9</accession>
<accession>Q40716</accession>
<accession>Q7XSS8</accession>
<organism>
    <name type="scientific">Oryza sativa subsp. japonica</name>
    <name type="common">Rice</name>
    <dbReference type="NCBI Taxonomy" id="39947"/>
    <lineage>
        <taxon>Eukaryota</taxon>
        <taxon>Viridiplantae</taxon>
        <taxon>Streptophyta</taxon>
        <taxon>Embryophyta</taxon>
        <taxon>Tracheophyta</taxon>
        <taxon>Spermatophyta</taxon>
        <taxon>Magnoliopsida</taxon>
        <taxon>Liliopsida</taxon>
        <taxon>Poales</taxon>
        <taxon>Poaceae</taxon>
        <taxon>BOP clade</taxon>
        <taxon>Oryzoideae</taxon>
        <taxon>Oryzeae</taxon>
        <taxon>Oryzinae</taxon>
        <taxon>Oryza</taxon>
        <taxon>Oryza sativa</taxon>
    </lineage>
</organism>
<gene>
    <name evidence="7 8" type="primary">PSBS2</name>
    <name evidence="10" type="synonym">PSBS</name>
    <name evidence="9" type="synonym">PSII-S</name>
    <name evidence="11" type="ordered locus">Os04g0690800</name>
    <name type="ordered locus">LOC_Os04g59440</name>
    <name evidence="14" type="ORF">OsJ_16732</name>
    <name evidence="13" type="ORF">OSJNBa0039K24.28</name>
    <name evidence="12" type="ORF">OSNPB_040690800</name>
</gene>
<sequence length="254" mass="26950">MALQQSMAMPMMVVSDLGTAPRSSPMVQLQRMKKHLVVVAAFKSRTKASPKVDKSNKNKSIVEDGIFGTSGGIGFTKENELFVGRVAMLGFAASLLGEAVTGKGILAQLNLETGIPIYEAEPLLLFFILFTLLGAIGALGDRGRFVDDATGLERAVIPPGKGFRAALGLSEGGPLFGFTKANELFVGRLAQLGIAFSLIGEIITGKGALAQLNIETGVPINEIEPLLLFNILFFFFAAINPGTGKFVTDDNDDQ</sequence>
<protein>
    <recommendedName>
        <fullName evidence="10">Photosystem II 22 kDa protein 2, chloroplastic</fullName>
        <shortName evidence="10">22 kDa protein of photosystem II 2</shortName>
    </recommendedName>
    <alternativeName>
        <fullName evidence="7 8">Photosystem II subunit 2</fullName>
        <shortName evidence="7 8">OsPsbS2</shortName>
    </alternativeName>
</protein>
<dbReference type="EMBL" id="D84392">
    <property type="protein sequence ID" value="BAA12337.1"/>
    <property type="molecule type" value="mRNA"/>
</dbReference>
<dbReference type="EMBL" id="AL606637">
    <property type="protein sequence ID" value="CAE01809.2"/>
    <property type="status" value="ALT_INIT"/>
    <property type="molecule type" value="Genomic_DNA"/>
</dbReference>
<dbReference type="EMBL" id="AP008210">
    <property type="protein sequence ID" value="BAF16268.1"/>
    <property type="molecule type" value="Genomic_DNA"/>
</dbReference>
<dbReference type="EMBL" id="AP014960">
    <property type="protein sequence ID" value="BAS91775.1"/>
    <property type="molecule type" value="Genomic_DNA"/>
</dbReference>
<dbReference type="EMBL" id="CM000141">
    <property type="protein sequence ID" value="EAZ32512.1"/>
    <property type="status" value="ALT_INIT"/>
    <property type="molecule type" value="Genomic_DNA"/>
</dbReference>
<dbReference type="PIR" id="JC6204">
    <property type="entry name" value="JC6204"/>
</dbReference>
<dbReference type="SMR" id="Q0J8R9"/>
<dbReference type="STRING" id="39947.Q0J8R9"/>
<dbReference type="PaxDb" id="39947-Q0J8R9"/>
<dbReference type="EnsemblPlants" id="Os04t0690800-01">
    <property type="protein sequence ID" value="Os04t0690800-01"/>
    <property type="gene ID" value="Os04g0690800"/>
</dbReference>
<dbReference type="GeneID" id="4337500"/>
<dbReference type="Gramene" id="Os04t0690800-01">
    <property type="protein sequence ID" value="Os04t0690800-01"/>
    <property type="gene ID" value="Os04g0690800"/>
</dbReference>
<dbReference type="KEGG" id="dosa:Os04g0690800"/>
<dbReference type="KEGG" id="osa:4337500"/>
<dbReference type="eggNOG" id="ENOG502QTMT">
    <property type="taxonomic scope" value="Eukaryota"/>
</dbReference>
<dbReference type="HOGENOM" id="CLU_090803_0_0_1"/>
<dbReference type="InParanoid" id="Q0J8R9"/>
<dbReference type="OMA" id="NAAQISW"/>
<dbReference type="OrthoDB" id="48883at2759"/>
<dbReference type="Proteomes" id="UP000000763">
    <property type="component" value="Chromosome 4"/>
</dbReference>
<dbReference type="Proteomes" id="UP000007752">
    <property type="component" value="Chromosome 4"/>
</dbReference>
<dbReference type="Proteomes" id="UP000059680">
    <property type="component" value="Chromosome 4"/>
</dbReference>
<dbReference type="GO" id="GO:0009535">
    <property type="term" value="C:chloroplast thylakoid membrane"/>
    <property type="evidence" value="ECO:0000318"/>
    <property type="project" value="GO_Central"/>
</dbReference>
<dbReference type="GO" id="GO:0009523">
    <property type="term" value="C:photosystem II"/>
    <property type="evidence" value="ECO:0007669"/>
    <property type="project" value="UniProtKB-KW"/>
</dbReference>
<dbReference type="GO" id="GO:0015979">
    <property type="term" value="P:photosynthesis"/>
    <property type="evidence" value="ECO:0007669"/>
    <property type="project" value="UniProtKB-KW"/>
</dbReference>
<dbReference type="GO" id="GO:0009637">
    <property type="term" value="P:response to blue light"/>
    <property type="evidence" value="ECO:0000270"/>
    <property type="project" value="UniProtKB"/>
</dbReference>
<dbReference type="GO" id="GO:0010114">
    <property type="term" value="P:response to red light"/>
    <property type="evidence" value="ECO:0000270"/>
    <property type="project" value="UniProtKB"/>
</dbReference>
<dbReference type="FunFam" id="1.10.3460.10:FF:000008">
    <property type="entry name" value="Photosystem II 22 kDa protein, chloroplastic"/>
    <property type="match status" value="2"/>
</dbReference>
<dbReference type="Gene3D" id="1.10.3460.10">
    <property type="entry name" value="Chlorophyll a/b binding protein domain"/>
    <property type="match status" value="2"/>
</dbReference>
<dbReference type="InterPro" id="IPR022796">
    <property type="entry name" value="Chloroa_b-bind"/>
</dbReference>
<dbReference type="PANTHER" id="PTHR14154">
    <property type="entry name" value="UPF0041 BRAIN PROTEIN 44-RELATED"/>
    <property type="match status" value="1"/>
</dbReference>
<dbReference type="Pfam" id="PF00504">
    <property type="entry name" value="Chloroa_b-bind"/>
    <property type="match status" value="1"/>
</dbReference>
<dbReference type="SUPFAM" id="SSF103511">
    <property type="entry name" value="Chlorophyll a-b binding protein"/>
    <property type="match status" value="1"/>
</dbReference>
<keyword id="KW-0150">Chloroplast</keyword>
<keyword id="KW-0472">Membrane</keyword>
<keyword id="KW-0602">Photosynthesis</keyword>
<keyword id="KW-0604">Photosystem II</keyword>
<keyword id="KW-0934">Plastid</keyword>
<keyword id="KW-1185">Reference proteome</keyword>
<keyword id="KW-0677">Repeat</keyword>
<keyword id="KW-0793">Thylakoid</keyword>
<keyword id="KW-0809">Transit peptide</keyword>
<keyword id="KW-0812">Transmembrane</keyword>
<keyword id="KW-1133">Transmembrane helix</keyword>